<dbReference type="EMBL" id="AJ627033">
    <property type="protein sequence ID" value="CAF25291.1"/>
    <property type="molecule type" value="mRNA"/>
</dbReference>
<dbReference type="EMBL" id="AJ640138">
    <property type="protein sequence ID" value="CAG26692.1"/>
    <property type="molecule type" value="mRNA"/>
</dbReference>
<dbReference type="EMBL" id="AK014915">
    <property type="protein sequence ID" value="BAC25453.1"/>
    <property type="molecule type" value="mRNA"/>
</dbReference>
<dbReference type="EMBL" id="AK016861">
    <property type="protein sequence ID" value="BAB30471.1"/>
    <property type="molecule type" value="mRNA"/>
</dbReference>
<dbReference type="EMBL" id="AK049588">
    <property type="protein sequence ID" value="BAC33829.1"/>
    <property type="molecule type" value="mRNA"/>
</dbReference>
<dbReference type="EMBL" id="BC055787">
    <property type="protein sequence ID" value="AAH55787.1"/>
    <property type="molecule type" value="mRNA"/>
</dbReference>
<dbReference type="CCDS" id="CCDS37035.1">
    <molecule id="Q6KCD5-1"/>
</dbReference>
<dbReference type="RefSeq" id="NP_081983.2">
    <molecule id="Q6KCD5-1"/>
    <property type="nucleotide sequence ID" value="NM_027707.3"/>
</dbReference>
<dbReference type="RefSeq" id="NP_957684.1">
    <molecule id="Q6KCD5-2"/>
    <property type="nucleotide sequence ID" value="NM_201232.2"/>
</dbReference>
<dbReference type="RefSeq" id="XP_006520057.1">
    <molecule id="Q6KCD5-1"/>
    <property type="nucleotide sequence ID" value="XM_006519994.4"/>
</dbReference>
<dbReference type="RefSeq" id="XP_006520058.1">
    <molecule id="Q6KCD5-1"/>
    <property type="nucleotide sequence ID" value="XM_006519995.2"/>
</dbReference>
<dbReference type="RefSeq" id="XP_017172234.1">
    <property type="nucleotide sequence ID" value="XM_017316745.1"/>
</dbReference>
<dbReference type="SMR" id="Q6KCD5"/>
<dbReference type="BioGRID" id="214531">
    <property type="interactions" value="16"/>
</dbReference>
<dbReference type="DIP" id="DIP-56622N"/>
<dbReference type="FunCoup" id="Q6KCD5">
    <property type="interactions" value="5645"/>
</dbReference>
<dbReference type="IntAct" id="Q6KCD5">
    <property type="interactions" value="14"/>
</dbReference>
<dbReference type="MINT" id="Q6KCD5"/>
<dbReference type="STRING" id="10090.ENSMUSP00000059385"/>
<dbReference type="GlyGen" id="Q6KCD5">
    <property type="glycosylation" value="7 sites, 5 N-linked glycans (5 sites), 1 O-linked glycan (2 sites)"/>
</dbReference>
<dbReference type="iPTMnet" id="Q6KCD5"/>
<dbReference type="PhosphoSitePlus" id="Q6KCD5"/>
<dbReference type="jPOST" id="Q6KCD5"/>
<dbReference type="PaxDb" id="10090-ENSMUSP00000059385"/>
<dbReference type="PeptideAtlas" id="Q6KCD5"/>
<dbReference type="ProteomicsDB" id="253071">
    <molecule id="Q6KCD5-1"/>
</dbReference>
<dbReference type="ProteomicsDB" id="253072">
    <molecule id="Q6KCD5-2"/>
</dbReference>
<dbReference type="ProteomicsDB" id="253073">
    <molecule id="Q6KCD5-3"/>
</dbReference>
<dbReference type="ProteomicsDB" id="253074">
    <molecule id="Q6KCD5-4"/>
</dbReference>
<dbReference type="Pumba" id="Q6KCD5"/>
<dbReference type="Antibodypedia" id="10283">
    <property type="antibodies" value="189 antibodies from 33 providers"/>
</dbReference>
<dbReference type="DNASU" id="71175"/>
<dbReference type="Ensembl" id="ENSMUST00000052965.8">
    <molecule id="Q6KCD5-1"/>
    <property type="protein sequence ID" value="ENSMUSP00000059385.7"/>
    <property type="gene ID" value="ENSMUSG00000022141.8"/>
</dbReference>
<dbReference type="GeneID" id="71175"/>
<dbReference type="KEGG" id="mmu:71175"/>
<dbReference type="UCSC" id="uc007veq.2">
    <molecule id="Q6KCD5-1"/>
    <property type="organism name" value="mouse"/>
</dbReference>
<dbReference type="UCSC" id="uc007ver.2">
    <molecule id="Q6KCD5-2"/>
    <property type="organism name" value="mouse"/>
</dbReference>
<dbReference type="UCSC" id="uc007vev.1">
    <molecule id="Q6KCD5-4"/>
    <property type="organism name" value="mouse"/>
</dbReference>
<dbReference type="AGR" id="MGI:1913976"/>
<dbReference type="CTD" id="25836"/>
<dbReference type="MGI" id="MGI:1913976">
    <property type="gene designation" value="Nipbl"/>
</dbReference>
<dbReference type="VEuPathDB" id="HostDB:ENSMUSG00000022141"/>
<dbReference type="eggNOG" id="KOG1020">
    <property type="taxonomic scope" value="Eukaryota"/>
</dbReference>
<dbReference type="GeneTree" id="ENSGT00390000010427"/>
<dbReference type="HOGENOM" id="CLU_000763_0_0_1"/>
<dbReference type="InParanoid" id="Q6KCD5"/>
<dbReference type="OMA" id="KQNENRM"/>
<dbReference type="OrthoDB" id="418242at2759"/>
<dbReference type="PhylomeDB" id="Q6KCD5"/>
<dbReference type="TreeFam" id="TF313121"/>
<dbReference type="Reactome" id="R-MMU-2470946">
    <property type="pathway name" value="Cohesin Loading onto Chromatin"/>
</dbReference>
<dbReference type="BioGRID-ORCS" id="71175">
    <property type="hits" value="20 hits in 78 CRISPR screens"/>
</dbReference>
<dbReference type="ChiTaRS" id="Nipbl">
    <property type="organism name" value="mouse"/>
</dbReference>
<dbReference type="PRO" id="PR:Q6KCD5"/>
<dbReference type="Proteomes" id="UP000000589">
    <property type="component" value="Chromosome 15"/>
</dbReference>
<dbReference type="RNAct" id="Q6KCD5">
    <property type="molecule type" value="protein"/>
</dbReference>
<dbReference type="Bgee" id="ENSMUSG00000022141">
    <property type="expression patterns" value="Expressed in rostral migratory stream and 256 other cell types or tissues"/>
</dbReference>
<dbReference type="GO" id="GO:0000785">
    <property type="term" value="C:chromatin"/>
    <property type="evidence" value="ECO:0000314"/>
    <property type="project" value="MGI"/>
</dbReference>
<dbReference type="GO" id="GO:0005829">
    <property type="term" value="C:cytosol"/>
    <property type="evidence" value="ECO:0007669"/>
    <property type="project" value="Ensembl"/>
</dbReference>
<dbReference type="GO" id="GO:0032039">
    <property type="term" value="C:integrator complex"/>
    <property type="evidence" value="ECO:0000314"/>
    <property type="project" value="UniProtKB"/>
</dbReference>
<dbReference type="GO" id="GO:0005654">
    <property type="term" value="C:nucleoplasm"/>
    <property type="evidence" value="ECO:0007669"/>
    <property type="project" value="Ensembl"/>
</dbReference>
<dbReference type="GO" id="GO:0005634">
    <property type="term" value="C:nucleus"/>
    <property type="evidence" value="ECO:0000314"/>
    <property type="project" value="UniProtKB"/>
</dbReference>
<dbReference type="GO" id="GO:0090694">
    <property type="term" value="C:Scc2-Scc4 cohesin loading complex"/>
    <property type="evidence" value="ECO:0000250"/>
    <property type="project" value="UniProtKB"/>
</dbReference>
<dbReference type="GO" id="GO:0032116">
    <property type="term" value="C:SMC loading complex"/>
    <property type="evidence" value="ECO:0000250"/>
    <property type="project" value="UniProtKB"/>
</dbReference>
<dbReference type="GO" id="GO:0003682">
    <property type="term" value="F:chromatin binding"/>
    <property type="evidence" value="ECO:0000314"/>
    <property type="project" value="MGI"/>
</dbReference>
<dbReference type="GO" id="GO:0070087">
    <property type="term" value="F:chromo shadow domain binding"/>
    <property type="evidence" value="ECO:0007669"/>
    <property type="project" value="Ensembl"/>
</dbReference>
<dbReference type="GO" id="GO:0061775">
    <property type="term" value="F:cohesin loader activity"/>
    <property type="evidence" value="ECO:0000315"/>
    <property type="project" value="GO_Central"/>
</dbReference>
<dbReference type="GO" id="GO:0042826">
    <property type="term" value="F:histone deacetylase binding"/>
    <property type="evidence" value="ECO:0007669"/>
    <property type="project" value="Ensembl"/>
</dbReference>
<dbReference type="GO" id="GO:0036033">
    <property type="term" value="F:mediator complex binding"/>
    <property type="evidence" value="ECO:0000314"/>
    <property type="project" value="MGI"/>
</dbReference>
<dbReference type="GO" id="GO:1990841">
    <property type="term" value="F:promoter-specific chromatin binding"/>
    <property type="evidence" value="ECO:0000314"/>
    <property type="project" value="ARUK-UCL"/>
</dbReference>
<dbReference type="GO" id="GO:0003714">
    <property type="term" value="F:transcription corepressor activity"/>
    <property type="evidence" value="ECO:0007669"/>
    <property type="project" value="Ensembl"/>
</dbReference>
<dbReference type="GO" id="GO:0007420">
    <property type="term" value="P:brain development"/>
    <property type="evidence" value="ECO:0007669"/>
    <property type="project" value="Ensembl"/>
</dbReference>
<dbReference type="GO" id="GO:0071481">
    <property type="term" value="P:cellular response to X-ray"/>
    <property type="evidence" value="ECO:0007669"/>
    <property type="project" value="Ensembl"/>
</dbReference>
<dbReference type="GO" id="GO:0140588">
    <property type="term" value="P:chromatin looping"/>
    <property type="evidence" value="ECO:0007669"/>
    <property type="project" value="InterPro"/>
</dbReference>
<dbReference type="GO" id="GO:0006338">
    <property type="term" value="P:chromatin remodeling"/>
    <property type="evidence" value="ECO:0007669"/>
    <property type="project" value="Ensembl"/>
</dbReference>
<dbReference type="GO" id="GO:0050890">
    <property type="term" value="P:cognition"/>
    <property type="evidence" value="ECO:0007669"/>
    <property type="project" value="Ensembl"/>
</dbReference>
<dbReference type="GO" id="GO:0048589">
    <property type="term" value="P:developmental growth"/>
    <property type="evidence" value="ECO:0007669"/>
    <property type="project" value="Ensembl"/>
</dbReference>
<dbReference type="GO" id="GO:0006974">
    <property type="term" value="P:DNA damage response"/>
    <property type="evidence" value="ECO:0007669"/>
    <property type="project" value="Ensembl"/>
</dbReference>
<dbReference type="GO" id="GO:0042471">
    <property type="term" value="P:ear morphogenesis"/>
    <property type="evidence" value="ECO:0007669"/>
    <property type="project" value="Ensembl"/>
</dbReference>
<dbReference type="GO" id="GO:0048701">
    <property type="term" value="P:embryonic cranial skeleton morphogenesis"/>
    <property type="evidence" value="ECO:0000315"/>
    <property type="project" value="MGI"/>
</dbReference>
<dbReference type="GO" id="GO:0048557">
    <property type="term" value="P:embryonic digestive tract morphogenesis"/>
    <property type="evidence" value="ECO:0007669"/>
    <property type="project" value="Ensembl"/>
</dbReference>
<dbReference type="GO" id="GO:0035115">
    <property type="term" value="P:embryonic forelimb morphogenesis"/>
    <property type="evidence" value="ECO:0007669"/>
    <property type="project" value="Ensembl"/>
</dbReference>
<dbReference type="GO" id="GO:0048703">
    <property type="term" value="P:embryonic viscerocranium morphogenesis"/>
    <property type="evidence" value="ECO:0000315"/>
    <property type="project" value="MGI"/>
</dbReference>
<dbReference type="GO" id="GO:0035261">
    <property type="term" value="P:external genitalia morphogenesis"/>
    <property type="evidence" value="ECO:0007669"/>
    <property type="project" value="Ensembl"/>
</dbReference>
<dbReference type="GO" id="GO:0048592">
    <property type="term" value="P:eye morphogenesis"/>
    <property type="evidence" value="ECO:0007669"/>
    <property type="project" value="Ensembl"/>
</dbReference>
<dbReference type="GO" id="GO:0060325">
    <property type="term" value="P:face morphogenesis"/>
    <property type="evidence" value="ECO:0007669"/>
    <property type="project" value="Ensembl"/>
</dbReference>
<dbReference type="GO" id="GO:0045444">
    <property type="term" value="P:fat cell differentiation"/>
    <property type="evidence" value="ECO:0000315"/>
    <property type="project" value="MGI"/>
</dbReference>
<dbReference type="GO" id="GO:0061010">
    <property type="term" value="P:gallbladder development"/>
    <property type="evidence" value="ECO:0007669"/>
    <property type="project" value="Ensembl"/>
</dbReference>
<dbReference type="GO" id="GO:0007507">
    <property type="term" value="P:heart development"/>
    <property type="evidence" value="ECO:0000315"/>
    <property type="project" value="MGI"/>
</dbReference>
<dbReference type="GO" id="GO:0034088">
    <property type="term" value="P:maintenance of mitotic sister chromatid cohesion"/>
    <property type="evidence" value="ECO:0000250"/>
    <property type="project" value="UniProtKB"/>
</dbReference>
<dbReference type="GO" id="GO:0000070">
    <property type="term" value="P:mitotic sister chromatid segregation"/>
    <property type="evidence" value="ECO:0000315"/>
    <property type="project" value="UniProtKB"/>
</dbReference>
<dbReference type="GO" id="GO:0000122">
    <property type="term" value="P:negative regulation of transcription by RNA polymerase II"/>
    <property type="evidence" value="ECO:0007669"/>
    <property type="project" value="Ensembl"/>
</dbReference>
<dbReference type="GO" id="GO:0003151">
    <property type="term" value="P:outflow tract morphogenesis"/>
    <property type="evidence" value="ECO:0007669"/>
    <property type="project" value="Ensembl"/>
</dbReference>
<dbReference type="GO" id="GO:0040018">
    <property type="term" value="P:positive regulation of multicellular organism growth"/>
    <property type="evidence" value="ECO:0000315"/>
    <property type="project" value="MGI"/>
</dbReference>
<dbReference type="GO" id="GO:2001224">
    <property type="term" value="P:positive regulation of neuron migration"/>
    <property type="evidence" value="ECO:0000315"/>
    <property type="project" value="UniProtKB"/>
</dbReference>
<dbReference type="GO" id="GO:0045778">
    <property type="term" value="P:positive regulation of ossification"/>
    <property type="evidence" value="ECO:0000315"/>
    <property type="project" value="MGI"/>
</dbReference>
<dbReference type="GO" id="GO:0045944">
    <property type="term" value="P:positive regulation of transcription by RNA polymerase II"/>
    <property type="evidence" value="ECO:0000315"/>
    <property type="project" value="MGI"/>
</dbReference>
<dbReference type="GO" id="GO:0008104">
    <property type="term" value="P:protein localization"/>
    <property type="evidence" value="ECO:0007669"/>
    <property type="project" value="Ensembl"/>
</dbReference>
<dbReference type="GO" id="GO:0045995">
    <property type="term" value="P:regulation of embryonic development"/>
    <property type="evidence" value="ECO:0007669"/>
    <property type="project" value="Ensembl"/>
</dbReference>
<dbReference type="GO" id="GO:0042634">
    <property type="term" value="P:regulation of hair cycle"/>
    <property type="evidence" value="ECO:0007669"/>
    <property type="project" value="Ensembl"/>
</dbReference>
<dbReference type="GO" id="GO:0006357">
    <property type="term" value="P:regulation of transcription by RNA polymerase II"/>
    <property type="evidence" value="ECO:0000315"/>
    <property type="project" value="UniProtKB"/>
</dbReference>
<dbReference type="GO" id="GO:0007605">
    <property type="term" value="P:sensory perception of sound"/>
    <property type="evidence" value="ECO:0007669"/>
    <property type="project" value="Ensembl"/>
</dbReference>
<dbReference type="GO" id="GO:0035019">
    <property type="term" value="P:somatic stem cell population maintenance"/>
    <property type="evidence" value="ECO:0000315"/>
    <property type="project" value="MGI"/>
</dbReference>
<dbReference type="GO" id="GO:0061038">
    <property type="term" value="P:uterus morphogenesis"/>
    <property type="evidence" value="ECO:0007669"/>
    <property type="project" value="Ensembl"/>
</dbReference>
<dbReference type="CDD" id="cd23958">
    <property type="entry name" value="SCC2"/>
    <property type="match status" value="1"/>
</dbReference>
<dbReference type="FunFam" id="1.25.10.10:FF:000225">
    <property type="entry name" value="Nipped-B protein"/>
    <property type="match status" value="1"/>
</dbReference>
<dbReference type="Gene3D" id="1.25.10.10">
    <property type="entry name" value="Leucine-rich Repeat Variant"/>
    <property type="match status" value="2"/>
</dbReference>
<dbReference type="InterPro" id="IPR011989">
    <property type="entry name" value="ARM-like"/>
</dbReference>
<dbReference type="InterPro" id="IPR016024">
    <property type="entry name" value="ARM-type_fold"/>
</dbReference>
<dbReference type="InterPro" id="IPR026003">
    <property type="entry name" value="Cohesin_HEAT"/>
</dbReference>
<dbReference type="InterPro" id="IPR024986">
    <property type="entry name" value="Nipped-B_C"/>
</dbReference>
<dbReference type="InterPro" id="IPR033031">
    <property type="entry name" value="Scc2/Nipped-B"/>
</dbReference>
<dbReference type="PANTHER" id="PTHR21704:SF18">
    <property type="entry name" value="NIPPED-B-LIKE PROTEIN"/>
    <property type="match status" value="1"/>
</dbReference>
<dbReference type="PANTHER" id="PTHR21704">
    <property type="entry name" value="NIPPED-B-LIKE PROTEIN DELANGIN SCC2-RELATED"/>
    <property type="match status" value="1"/>
</dbReference>
<dbReference type="Pfam" id="PF12765">
    <property type="entry name" value="Cohesin_HEAT"/>
    <property type="match status" value="1"/>
</dbReference>
<dbReference type="Pfam" id="PF12830">
    <property type="entry name" value="Nipped-B_C"/>
    <property type="match status" value="1"/>
</dbReference>
<dbReference type="SUPFAM" id="SSF48371">
    <property type="entry name" value="ARM repeat"/>
    <property type="match status" value="2"/>
</dbReference>
<sequence>MNGDMPHVPITTLAGIASLTDLLNQLPLPSPLPATTTKSLLFNSRIAEEVNCLLACRDDNLVSQLVHSLNQVSTDHIELKDNLGSDDPEGDIPVLLQAVLARSPNVFREKSMQNRYVQSGMMMSQYKLSQNSMHSSPASSNYQQTTISHSPSSRFVPPQTSSGNRFMPQQNSPVPSPYAPQSPAGYMPYSHPSSYTTHPQMQQASVSSPIVAGGLRNIHDNKVSGPLSGNSANHHADNPRHGSSDDYLHMVHRLSSDDGDSSTMRNAASFPLRSPQPVCSPAGSDGTPKGSRPPLILQSQSLPCSSPRDVPPDILLDSPERKQKKQKKIKLGKDEKDQNEKAAMYDIISSPTKDSTKLTLRLSRVRSSDMDQQDDMLSGMENSNVSENDIPFNVQYPGQTSKTPITPQDVNRPLNAAQCLSQQEQTAFLPANQVPVLQQNTSVATKQPQTSVVQNQQQVSQQGPIYDEVELDALAEIERIERESAIERERFSKEVQDKDKPLKKRKQDSYPQEAGGATGGNRPASQETGSTGNGSRPALMVSIDLHQAGRVDSQASITQDSDSIKKPEETKQCNDAPISVLQEDIVGSLKSIPENHPETPKKKSDPELSKSEMKQNESRLSESKPNENQLGESKSNESKLETKTETPTEELKQNENKTTESKQSESAVVEPKQNENRPCDTKPNDNKQNNTRSENTKARPETPKQKAESRPETPKQKSEGRPETPKQKGDGRPETPKQKSEGRPETPKQKGEGRPETPKHRHENRRDSGKPSTEKKPDVSKHKQDIKSDSPRLKSERAEALKQRPDGRWESLRRDHDSKQKSDDRGESERHRGDQSRVRRPETLRSSSRNDHSTKSDGSKTEKLERKHRHESGDSRDRPSGEQKSRPDSPRVKQGDTNKSRPGFKSPNSKDDKRTEGNRSKVDSNKAHTDNKAEFPSYLLGGRSGALKNFVIPKIKRDKDGNITQETKKMDMKGEQKDKVEKMGLVEDLNKGAKPVVVLQKLSLDDVQKLIKDREEKSRSSLKSIKNKPSKSNKGSIDQSVLKELPPELLAEIESTMPLCERVKMNKRKRSTVNEKPKYAEISSDEDNDSDEAFESSRKRHKKDDDKAWEYEERDRRSSGDHRRSGHSHDGRRSSGGGRYRNRSPSDSDMEDYSPPPSLSEVARKMKKKEKQKKRKAYEPKLTPEEMMDSSTFKRFTASIENILDNLEDMDFTAFGDDDEIPQELLLGKHQLNELGSESAKIKAMGIMDKLSTDKTVKVLNILEKNIQDGSKLSTLLNHNNDTEEEERLWRDLIMERVTKSADACLTTINIMTSPNMPKAVYIEDVIERVIQYTKFHLQNTLYPQYDPVYRVDPHGGGLLSSKAKRAKCSTHKQRVIVMLYNKVCDIVSSLSELLEIQLLTDTTILQVSSMGITPFFVENVSELQLCAIKLVTAVFSRYEKHRQLILEEIFTSLARLPTSKRSLRNFRLNSSDVDGEPMYIQMVTALVLQLIQCVVHLPSSEKDPNSEEDSNKKVDQDVVITNSYETAMRTAQNFLSIFLKKCGSKQGEEDYRPLFENFVQDLLSTVNKPEWPAAELLLSLLGRLLVHQFSNKSTEMALRVASLDYLGTVAARLRKDAVTSKMDQGSIERILKQVSGGEDEIQQLQKALLDYLDENTETDPSLVFSRKFYIAQWFRDTTLETEKAMKSQKDEESSDATHHAKELETTGQIMHRAENRKKFLRSIIKTTPSQFSTLKMNSDTVDYDDACLIVRYLASMRPFAQSFDIYLTQILRVLGENAIAVRTKAMKCLSEVVAVDPSILARLDMQRGVHGRLMDNSTSVREAAVELLGRFVLCRPQLAEQYYDMLIERILDTGISVRKRVIKILRDICIEQPTFPKITEMCVKMIRRVNDEEGIKKLVNETFQKLWFTPTPHNDKEAMTRKILNITDVVAACRDTGYDWFEQLLQNLLKSEEDSSYKPVKKACTQLVDNLVEHILKYEESLADSDNKGVNSGRLVACITTLFLFSKIRPQLMVKHAMTMQPYLTTKCSTQNDFMVICNVAKILELVVPLMEHPSETFLATIEEDLMKLIIKYGMTVVQHCVSCLGAVVNKVTQNFKFVWACFNRYYGAISKLKSQHQEDPNNTSLLTNKPALLRSLFTVGALCRHFDFDLEDFKGNSKVNIKDKVLELLMYFTKHSDEEVQTKAIIGLGFAFIQHPSLMFEQEVKNLYNSILSDKNSSVNLKIQVLKNLQTYLQEEDTRMQQADRDWKKVAKQEDLKEMGDVSSGMSSSIMQLYLKQVLEAFFHTQSSVRHFALNVIALTLNQGLIHPVQCVPYLIAMGTDPEPAMRNKADQQLVEIDKKYAGFIHMKAVAGMKMSYQVQQAINTCLKDPVRGFRQDESSSALCSHLYSMIRGNRQHRRAFLISLLNLFDDTAKTEVTMLLYIADNLACFPYQTQEEPLFIMHHIDITLSVSGSNLLQSFKESMVKDKRKERKTSPAKENESSESEEEVSRPRKSRKRVDSESDSDSEDDINSVMKCLPENSAPLIEFANVSQGILLLLMLKQHLKNLCGFSDSKIQKYSPSESAKVYDKAINRKTGVHFHPKQTLDFLRSDMANSKLTEDVKRSIVRQYLDFKLLMEHLDPDEEEEEGEVSASTNARNKAITSLLGGGSPKNNTAADTEDEESDGEDRGGGTSGSLRRSKRNSDSTELAAQMNESVDVMDVIAICCPKYKDRPQIARVVQRTSSGVSVQWMAGSYSGSWTEAKRRDGRKLVPWVDTIKESDIIYKKIALTSANKLTNKVVQTLRSLYAAKDGTSS</sequence>
<accession>Q6KCD5</accession>
<accession>Q6KC78</accession>
<accession>Q7TNS4</accession>
<accession>Q8BKV4</accession>
<accession>Q8CES9</accession>
<accession>Q9CUC6</accession>
<proteinExistence type="evidence at protein level"/>
<comment type="function">
    <text evidence="1 6 8">Plays an important role in the loading of the cohesin complex on to DNA (PubMed:29094699). Forms a heterodimeric complex (also known as cohesin loading complex) with MAU2/SCC4 which mediates the loading of the cohesin complex onto chromatin. Plays a role in cohesin loading at sites of DNA damage. Its recruitment to double-strand breaks (DSBs) sites occurs in a CBX3-, RNF8- and RNF168-dependent manner whereas its recruitment to UV irradiation-induced DNA damage sites occurs in a ATM-, ATR-, RNF8- and RNF168-dependent manner (By similarity). Along with ZNF609, promotes cortical neuron migration during brain development by regulating the transcription of crucial genes in this process. Preferentially binds promoters containing paused RNA polymerase II. Up-regulates the expression of SEMA3A, NRP1, PLXND1 and GABBR2 genes, among others (PubMed:28041881).</text>
</comment>
<comment type="subunit">
    <text evidence="1 6 9">Heterodimerizes with MAU2/SCC4 to form the cohesin loading complex (By similarity). The NIPBL-MAU2 heterodimer interacts with the cohesin complex composed of SMC1A/B and SMC3 heterodimer, RAD21 and STAG1/SA1. NIPBL directly contacts all members of the complex, RAD21, SMC1A/B, SMC3 and STAG1 (By similarity). Interacts directly (via PxVxL motif) with CBX3 and CBX5 (By similarity). Interacts with ZNF609 (via N-terminus) (PubMed:28041881). Interacts with the multiprotein complex Integrator (PubMed:28041881). Interacts with BRD4 (PubMed:29379197).</text>
</comment>
<comment type="subcellular location">
    <subcellularLocation>
        <location evidence="4 5 6 7">Nucleus</location>
    </subcellularLocation>
    <subcellularLocation>
        <location evidence="4 5">Chromosome</location>
    </subcellularLocation>
</comment>
<comment type="alternative products">
    <event type="alternative splicing"/>
    <isoform>
        <id>Q6KCD5-1</id>
        <name>1</name>
        <sequence type="displayed"/>
    </isoform>
    <isoform>
        <id>Q6KCD5-2</id>
        <name>2</name>
        <sequence type="described" ref="VSP_011098 VSP_011099"/>
    </isoform>
    <isoform>
        <id>Q6KCD5-3</id>
        <name>3</name>
        <sequence type="described" ref="VSP_011094"/>
    </isoform>
    <isoform>
        <id>Q6KCD5-4</id>
        <name>4</name>
        <sequence type="described" ref="VSP_011095 VSP_011096 VSP_011097"/>
    </isoform>
</comment>
<comment type="tissue specificity">
    <text evidence="4 5">Spermatocytes and oocytes (at protein level).</text>
</comment>
<comment type="developmental stage">
    <text evidence="3 6">Widely expressed at 9.5 and 10.5 dpc, with notable accumulations in limb bud, branchial arch and craniofacial mesenchyme. These regions are involved in patterning of the skeleton and soft tissues of the limbs, jaw and face. Expressed in the developing brain, with enrichment in the ventricular zone at 14.5 dpc (PubMed:28041881).</text>
</comment>
<comment type="domain">
    <text evidence="1">Contains one Pro-Xaa-Val-Xaa-Leu (PxVxL) motif, which is required for interaction with chromoshadow domains. This motif requires additional residues -7, -6, +4 and +5 of the central Val which contact the chromoshadow domain.</text>
</comment>
<comment type="domain">
    <text evidence="1">The C-terminal region containing HEAT repeats and Pro-Xaa-Val-Xaa-Leu (PxVxL) motif are involved in the recruitment of NIPBL to sites of DNA damage.</text>
</comment>
<comment type="disruption phenotype">
    <text evidence="8">Deletion of NIPBL in mouse liver leads to strong depletion of chromatin-bound cohesin and marked reorganization of chromosomal folding. Cells retain transcriptionally active (type A) and transcriptionally inactive (type B) compartments, but lose topologically associating domains (TADs) patterns and TAD-associated peaks of contact enrichment across the whole genome. The compartmentalization of chromatin in cells lacking NIPBL is enhanced around 1.8-fold compared with controls.</text>
</comment>
<comment type="similarity">
    <text evidence="14">Belongs to the SCC2/Nipped-B family.</text>
</comment>
<reference key="1">
    <citation type="journal article" date="2004" name="Nat. Genet.">
        <title>NIPBL, encoding a homolog of fungal Scc2-type sister chromatid cohesion proteins and fly Nipped-B, is mutated in Cornelia de Lange syndrome.</title>
        <authorList>
            <person name="Tonkin E.T."/>
            <person name="Wang T.-J."/>
            <person name="Lisgo S."/>
            <person name="Bamshad M.J."/>
            <person name="Strachan T."/>
        </authorList>
    </citation>
    <scope>NUCLEOTIDE SEQUENCE [MRNA] (ISOFORMS 1 AND 2)</scope>
    <source>
        <strain>C57BL/6J</strain>
    </source>
</reference>
<reference key="2">
    <citation type="journal article" date="2005" name="Science">
        <title>The transcriptional landscape of the mammalian genome.</title>
        <authorList>
            <person name="Carninci P."/>
            <person name="Kasukawa T."/>
            <person name="Katayama S."/>
            <person name="Gough J."/>
            <person name="Frith M.C."/>
            <person name="Maeda N."/>
            <person name="Oyama R."/>
            <person name="Ravasi T."/>
            <person name="Lenhard B."/>
            <person name="Wells C."/>
            <person name="Kodzius R."/>
            <person name="Shimokawa K."/>
            <person name="Bajic V.B."/>
            <person name="Brenner S.E."/>
            <person name="Batalov S."/>
            <person name="Forrest A.R."/>
            <person name="Zavolan M."/>
            <person name="Davis M.J."/>
            <person name="Wilming L.G."/>
            <person name="Aidinis V."/>
            <person name="Allen J.E."/>
            <person name="Ambesi-Impiombato A."/>
            <person name="Apweiler R."/>
            <person name="Aturaliya R.N."/>
            <person name="Bailey T.L."/>
            <person name="Bansal M."/>
            <person name="Baxter L."/>
            <person name="Beisel K.W."/>
            <person name="Bersano T."/>
            <person name="Bono H."/>
            <person name="Chalk A.M."/>
            <person name="Chiu K.P."/>
            <person name="Choudhary V."/>
            <person name="Christoffels A."/>
            <person name="Clutterbuck D.R."/>
            <person name="Crowe M.L."/>
            <person name="Dalla E."/>
            <person name="Dalrymple B.P."/>
            <person name="de Bono B."/>
            <person name="Della Gatta G."/>
            <person name="di Bernardo D."/>
            <person name="Down T."/>
            <person name="Engstrom P."/>
            <person name="Fagiolini M."/>
            <person name="Faulkner G."/>
            <person name="Fletcher C.F."/>
            <person name="Fukushima T."/>
            <person name="Furuno M."/>
            <person name="Futaki S."/>
            <person name="Gariboldi M."/>
            <person name="Georgii-Hemming P."/>
            <person name="Gingeras T.R."/>
            <person name="Gojobori T."/>
            <person name="Green R.E."/>
            <person name="Gustincich S."/>
            <person name="Harbers M."/>
            <person name="Hayashi Y."/>
            <person name="Hensch T.K."/>
            <person name="Hirokawa N."/>
            <person name="Hill D."/>
            <person name="Huminiecki L."/>
            <person name="Iacono M."/>
            <person name="Ikeo K."/>
            <person name="Iwama A."/>
            <person name="Ishikawa T."/>
            <person name="Jakt M."/>
            <person name="Kanapin A."/>
            <person name="Katoh M."/>
            <person name="Kawasawa Y."/>
            <person name="Kelso J."/>
            <person name="Kitamura H."/>
            <person name="Kitano H."/>
            <person name="Kollias G."/>
            <person name="Krishnan S.P."/>
            <person name="Kruger A."/>
            <person name="Kummerfeld S.K."/>
            <person name="Kurochkin I.V."/>
            <person name="Lareau L.F."/>
            <person name="Lazarevic D."/>
            <person name="Lipovich L."/>
            <person name="Liu J."/>
            <person name="Liuni S."/>
            <person name="McWilliam S."/>
            <person name="Madan Babu M."/>
            <person name="Madera M."/>
            <person name="Marchionni L."/>
            <person name="Matsuda H."/>
            <person name="Matsuzawa S."/>
            <person name="Miki H."/>
            <person name="Mignone F."/>
            <person name="Miyake S."/>
            <person name="Morris K."/>
            <person name="Mottagui-Tabar S."/>
            <person name="Mulder N."/>
            <person name="Nakano N."/>
            <person name="Nakauchi H."/>
            <person name="Ng P."/>
            <person name="Nilsson R."/>
            <person name="Nishiguchi S."/>
            <person name="Nishikawa S."/>
            <person name="Nori F."/>
            <person name="Ohara O."/>
            <person name="Okazaki Y."/>
            <person name="Orlando V."/>
            <person name="Pang K.C."/>
            <person name="Pavan W.J."/>
            <person name="Pavesi G."/>
            <person name="Pesole G."/>
            <person name="Petrovsky N."/>
            <person name="Piazza S."/>
            <person name="Reed J."/>
            <person name="Reid J.F."/>
            <person name="Ring B.Z."/>
            <person name="Ringwald M."/>
            <person name="Rost B."/>
            <person name="Ruan Y."/>
            <person name="Salzberg S.L."/>
            <person name="Sandelin A."/>
            <person name="Schneider C."/>
            <person name="Schoenbach C."/>
            <person name="Sekiguchi K."/>
            <person name="Semple C.A."/>
            <person name="Seno S."/>
            <person name="Sessa L."/>
            <person name="Sheng Y."/>
            <person name="Shibata Y."/>
            <person name="Shimada H."/>
            <person name="Shimada K."/>
            <person name="Silva D."/>
            <person name="Sinclair B."/>
            <person name="Sperling S."/>
            <person name="Stupka E."/>
            <person name="Sugiura K."/>
            <person name="Sultana R."/>
            <person name="Takenaka Y."/>
            <person name="Taki K."/>
            <person name="Tammoja K."/>
            <person name="Tan S.L."/>
            <person name="Tang S."/>
            <person name="Taylor M.S."/>
            <person name="Tegner J."/>
            <person name="Teichmann S.A."/>
            <person name="Ueda H.R."/>
            <person name="van Nimwegen E."/>
            <person name="Verardo R."/>
            <person name="Wei C.L."/>
            <person name="Yagi K."/>
            <person name="Yamanishi H."/>
            <person name="Zabarovsky E."/>
            <person name="Zhu S."/>
            <person name="Zimmer A."/>
            <person name="Hide W."/>
            <person name="Bult C."/>
            <person name="Grimmond S.M."/>
            <person name="Teasdale R.D."/>
            <person name="Liu E.T."/>
            <person name="Brusic V."/>
            <person name="Quackenbush J."/>
            <person name="Wahlestedt C."/>
            <person name="Mattick J.S."/>
            <person name="Hume D.A."/>
            <person name="Kai C."/>
            <person name="Sasaki D."/>
            <person name="Tomaru Y."/>
            <person name="Fukuda S."/>
            <person name="Kanamori-Katayama M."/>
            <person name="Suzuki M."/>
            <person name="Aoki J."/>
            <person name="Arakawa T."/>
            <person name="Iida J."/>
            <person name="Imamura K."/>
            <person name="Itoh M."/>
            <person name="Kato T."/>
            <person name="Kawaji H."/>
            <person name="Kawagashira N."/>
            <person name="Kawashima T."/>
            <person name="Kojima M."/>
            <person name="Kondo S."/>
            <person name="Konno H."/>
            <person name="Nakano K."/>
            <person name="Ninomiya N."/>
            <person name="Nishio T."/>
            <person name="Okada M."/>
            <person name="Plessy C."/>
            <person name="Shibata K."/>
            <person name="Shiraki T."/>
            <person name="Suzuki S."/>
            <person name="Tagami M."/>
            <person name="Waki K."/>
            <person name="Watahiki A."/>
            <person name="Okamura-Oho Y."/>
            <person name="Suzuki H."/>
            <person name="Kawai J."/>
            <person name="Hayashizaki Y."/>
        </authorList>
    </citation>
    <scope>NUCLEOTIDE SEQUENCE [LARGE SCALE MRNA] (ISOFORM 4)</scope>
    <scope>NUCLEOTIDE SEQUENCE [LARGE SCALE MRNA] OF 1-325</scope>
    <scope>NUCLEOTIDE SEQUENCE [LARGE SCALE MRNA] OF 2575-2798 (ISOFORM 2)</scope>
    <source>
        <strain>C57BL/6J</strain>
        <tissue>Testis</tissue>
    </source>
</reference>
<reference key="3">
    <citation type="journal article" date="2004" name="Genome Res.">
        <title>The status, quality, and expansion of the NIH full-length cDNA project: the Mammalian Gene Collection (MGC).</title>
        <authorList>
            <consortium name="The MGC Project Team"/>
        </authorList>
    </citation>
    <scope>NUCLEOTIDE SEQUENCE [LARGE SCALE MRNA] (ISOFORM 3)</scope>
    <source>
        <strain>C57BL/6J</strain>
        <tissue>Brain</tissue>
    </source>
</reference>
<reference key="4">
    <citation type="journal article" date="2004" name="Nat. Genet.">
        <title>Cornelia de Lange syndrome is caused by mutations in NIPBL, the human homolog of Drosophila melanogaster Nipped-B.</title>
        <authorList>
            <person name="Krantz I.D."/>
            <person name="McCallum J."/>
            <person name="DeScipio C."/>
            <person name="Kaur M."/>
            <person name="Gillis L.A."/>
            <person name="Yaeger D."/>
            <person name="Jukofsky L."/>
            <person name="Wasserman N."/>
            <person name="Bottani A."/>
            <person name="Morris C.A."/>
            <person name="Nowaczyk M.J.M."/>
            <person name="Toriello H."/>
            <person name="Bamshad M.J."/>
            <person name="Carey J.C."/>
            <person name="Rappaport E."/>
            <person name="Kawauchi S."/>
            <person name="Lander A.D."/>
            <person name="Calof A.L."/>
            <person name="Li H.-H."/>
            <person name="Devoto M."/>
            <person name="Jackson L.G."/>
        </authorList>
    </citation>
    <scope>DEVELOPMENTAL STAGE</scope>
</reference>
<reference key="5">
    <citation type="journal article" date="2007" name="Proc. Natl. Acad. Sci. U.S.A.">
        <title>Large-scale phosphorylation analysis of mouse liver.</title>
        <authorList>
            <person name="Villen J."/>
            <person name="Beausoleil S.A."/>
            <person name="Gerber S.A."/>
            <person name="Gygi S.P."/>
        </authorList>
    </citation>
    <scope>PHOSPHORYLATION [LARGE SCALE ANALYSIS] AT SER-280; SER-2652; THR-2661 AND SER-2666</scope>
    <scope>PHOSPHORYLATION [LARGE SCALE ANALYSIS] AT THR-2661 AND SER-2666 (ISOFORM 2)</scope>
    <scope>IDENTIFICATION BY MASS SPECTROMETRY [LARGE SCALE ANALYSIS]</scope>
    <source>
        <tissue>Liver</tissue>
    </source>
</reference>
<reference key="6">
    <citation type="journal article" date="2009" name="Immunity">
        <title>The phagosomal proteome in interferon-gamma-activated macrophages.</title>
        <authorList>
            <person name="Trost M."/>
            <person name="English L."/>
            <person name="Lemieux S."/>
            <person name="Courcelles M."/>
            <person name="Desjardins M."/>
            <person name="Thibault P."/>
        </authorList>
    </citation>
    <scope>PHOSPHORYLATION [LARGE SCALE ANALYSIS] AT SER-2652</scope>
    <scope>IDENTIFICATION BY MASS SPECTROMETRY [LARGE SCALE ANALYSIS]</scope>
</reference>
<reference key="7">
    <citation type="journal article" date="2010" name="Cell">
        <title>A tissue-specific atlas of mouse protein phosphorylation and expression.</title>
        <authorList>
            <person name="Huttlin E.L."/>
            <person name="Jedrychowski M.P."/>
            <person name="Elias J.E."/>
            <person name="Goswami T."/>
            <person name="Rad R."/>
            <person name="Beausoleil S.A."/>
            <person name="Villen J."/>
            <person name="Haas W."/>
            <person name="Sowa M.E."/>
            <person name="Gygi S.P."/>
        </authorList>
    </citation>
    <scope>PHOSPHORYLATION [LARGE SCALE ANALYSIS] AT SER-150; SER-256; SER-274; SER-280; SER-284; SER-301; SER-306; SER-318; SER-1083; SER-1084; SER-1090; SER-1144; SER-1146; SER-1148; TYR-1153; SER-1154; SER-2487; SER-2503; SER-2505; SER-2507; SER-2652; THR-2661 AND SER-2666</scope>
    <scope>PHOSPHORYLATION [LARGE SCALE ANALYSIS] AT THR-2661 AND SER-2666 (ISOFORM 2)</scope>
    <scope>IDENTIFICATION BY MASS SPECTROMETRY [LARGE SCALE ANALYSIS]</scope>
    <source>
        <tissue>Brain</tissue>
        <tissue>Brown adipose tissue</tissue>
        <tissue>Kidney</tissue>
        <tissue>Liver</tissue>
        <tissue>Lung</tissue>
        <tissue>Pancreas</tissue>
        <tissue>Spleen</tissue>
        <tissue>Testis</tissue>
    </source>
</reference>
<reference key="8">
    <citation type="journal article" date="2013" name="Cell Div.">
        <title>Cohesin loading factor Nipbl localizes to chromosome axes during mammalian meiotic prophase.</title>
        <authorList>
            <person name="Kuleszewicz K."/>
            <person name="Fu X."/>
            <person name="Kudo N.R."/>
        </authorList>
    </citation>
    <scope>SUBCELLULAR LOCATION</scope>
    <scope>TISSUE SPECIFICITY</scope>
</reference>
<reference key="9">
    <citation type="journal article" date="2013" name="Mol. Cell">
        <title>SIRT5-mediated lysine desuccinylation impacts diverse metabolic pathways.</title>
        <authorList>
            <person name="Park J."/>
            <person name="Chen Y."/>
            <person name="Tishkoff D.X."/>
            <person name="Peng C."/>
            <person name="Tan M."/>
            <person name="Dai L."/>
            <person name="Xie Z."/>
            <person name="Zhang Y."/>
            <person name="Zwaans B.M."/>
            <person name="Skinner M.E."/>
            <person name="Lombard D.B."/>
            <person name="Zhao Y."/>
        </authorList>
    </citation>
    <scope>ACETYLATION [LARGE SCALE ANALYSIS] AT LYS-1076</scope>
    <scope>IDENTIFICATION BY MASS SPECTROMETRY [LARGE SCALE ANALYSIS]</scope>
    <source>
        <tissue>Embryonic fibroblast</tissue>
    </source>
</reference>
<reference key="10">
    <citation type="journal article" date="2014" name="Chromosoma">
        <title>Localisation of the SMC loading complex Nipbl/Mau2 during mammalian meiotic prophase I.</title>
        <authorList>
            <person name="Visnes T."/>
            <person name="Giordano F."/>
            <person name="Kuznetsova A."/>
            <person name="Suja J.A."/>
            <person name="Lander A.D."/>
            <person name="Calof A.L."/>
            <person name="Stroem L."/>
        </authorList>
    </citation>
    <scope>SUBCELLULAR LOCATION</scope>
    <scope>TISSUE SPECIFICITY</scope>
</reference>
<reference key="11">
    <citation type="journal article" date="2014" name="Mol. Cell. Proteomics">
        <title>Immunoaffinity enrichment and mass spectrometry analysis of protein methylation.</title>
        <authorList>
            <person name="Guo A."/>
            <person name="Gu H."/>
            <person name="Zhou J."/>
            <person name="Mulhern D."/>
            <person name="Wang Y."/>
            <person name="Lee K.A."/>
            <person name="Yang V."/>
            <person name="Aguiar M."/>
            <person name="Kornhauser J."/>
            <person name="Jia X."/>
            <person name="Ren J."/>
            <person name="Beausoleil S.A."/>
            <person name="Silva J.C."/>
            <person name="Vemulapalli V."/>
            <person name="Bedford M.T."/>
            <person name="Comb M.J."/>
        </authorList>
    </citation>
    <scope>IDENTIFICATION BY MASS SPECTROMETRY [LARGE SCALE ANALYSIS]</scope>
    <source>
        <tissue>Embryo</tissue>
    </source>
</reference>
<reference key="12">
    <citation type="journal article" date="2017" name="Neuron">
        <title>Nipbl interacts with Zfp609 and the Integrator complex to regulate cortical neuron migration.</title>
        <authorList>
            <person name="van den Berg D.L."/>
            <person name="Azzarelli R."/>
            <person name="Oishi K."/>
            <person name="Martynoga B."/>
            <person name="Urban N."/>
            <person name="Dekkers D.H."/>
            <person name="Demmers J.A."/>
            <person name="Guillemot F."/>
        </authorList>
    </citation>
    <scope>FUNCTION</scope>
    <scope>SUBCELLULAR LOCATION</scope>
    <scope>INTERACTION WITH THE INTEGRATOR COMPLEX AND ZNF609</scope>
    <scope>DEVELOPMENTAL STAGE</scope>
</reference>
<reference key="13">
    <citation type="journal article" date="2017" name="Elife">
        <title>Scc2/Nipbl hops between chromosomal cohesin rings after loading.</title>
        <authorList>
            <person name="Rhodes J."/>
            <person name="Mazza D."/>
            <person name="Nasmyth K."/>
            <person name="Uphoff S."/>
        </authorList>
    </citation>
    <scope>SUBCELLULAR LOCATION</scope>
</reference>
<reference key="14">
    <citation type="journal article" date="2017" name="Nature">
        <title>Two independent modes of chromatin organization revealed by cohesin removal.</title>
        <authorList>
            <person name="Schwarzer W."/>
            <person name="Abdennur N."/>
            <person name="Goloborodko A."/>
            <person name="Pekowska A."/>
            <person name="Fudenberg G."/>
            <person name="Loe-Mie Y."/>
            <person name="Fonseca N.A."/>
            <person name="Huber W."/>
            <person name="Haering C.H."/>
            <person name="Mirny L."/>
            <person name="Spitz F."/>
        </authorList>
    </citation>
    <scope>FUNCTION</scope>
    <scope>DISRUPTION PHENOTYPE</scope>
</reference>
<reference key="15">
    <citation type="journal article" date="2018" name="Nat. Genet.">
        <title>BRD4 interacts with NIPBL and BRD4 is mutated in a Cornelia de Lange-like syndrome.</title>
        <authorList>
            <consortium name="Deciphering Developmental Disorders Study"/>
            <person name="Olley G."/>
            <person name="Ansari M."/>
            <person name="Bengani H."/>
            <person name="Grimes G.R."/>
            <person name="Rhodes J."/>
            <person name="von Kriegsheim A."/>
            <person name="Blatnik A."/>
            <person name="Stewart F.J."/>
            <person name="Wakeling E."/>
            <person name="Carroll N."/>
            <person name="Ross A."/>
            <person name="Park S.M."/>
            <person name="Bickmore W.A."/>
            <person name="Pradeepa M.M."/>
            <person name="FitzPatrick D.R."/>
        </authorList>
    </citation>
    <scope>INTERACTION WITH BRD4</scope>
</reference>
<reference key="16">
    <citation type="journal article" date="2018" name="Nat. Genet.">
        <authorList>
            <consortium name="Deciphering Developmental Disorders Study"/>
            <person name="Olley G."/>
            <person name="Ansari M."/>
            <person name="Bengani H."/>
            <person name="Grimes G.R."/>
            <person name="Rhodes J."/>
            <person name="von Kriegsheim A."/>
            <person name="Blatnik A."/>
            <person name="Stewart F.J."/>
            <person name="Wakeling E."/>
            <person name="Carroll N."/>
            <person name="Ross A."/>
            <person name="Park S.M."/>
            <person name="Bickmore W.A."/>
            <person name="Pradeepa M.M."/>
            <person name="FitzPatrick D.R."/>
        </authorList>
    </citation>
    <scope>ERRATUM OF PUBMED:29379197</scope>
</reference>
<reference key="17">
    <citation type="journal article" date="2019" name="Nat. Genet.">
        <authorList>
            <consortium name="Deciphering Developmental Disorders Study"/>
            <person name="Olley G."/>
            <person name="Ansari M."/>
            <person name="Bengani H."/>
            <person name="Grimes G.R."/>
            <person name="Rhodes J."/>
            <person name="von Kriegsheim A."/>
            <person name="Blatnik A."/>
            <person name="Stewart F.J."/>
            <person name="Wakeling E."/>
            <person name="Carroll N."/>
            <person name="Ross A."/>
            <person name="Park S.M."/>
            <person name="Bickmore W.A."/>
            <person name="Pradeepa M.M."/>
            <person name="FitzPatrick D.R."/>
        </authorList>
    </citation>
    <scope>ERRATUM OF PUBMED:29379197</scope>
</reference>
<name>NIPBL_MOUSE</name>
<evidence type="ECO:0000250" key="1">
    <source>
        <dbReference type="UniProtKB" id="Q6KC79"/>
    </source>
</evidence>
<evidence type="ECO:0000256" key="2">
    <source>
        <dbReference type="SAM" id="MobiDB-lite"/>
    </source>
</evidence>
<evidence type="ECO:0000269" key="3">
    <source>
    </source>
</evidence>
<evidence type="ECO:0000269" key="4">
    <source>
    </source>
</evidence>
<evidence type="ECO:0000269" key="5">
    <source>
    </source>
</evidence>
<evidence type="ECO:0000269" key="6">
    <source>
    </source>
</evidence>
<evidence type="ECO:0000269" key="7">
    <source>
    </source>
</evidence>
<evidence type="ECO:0000269" key="8">
    <source>
    </source>
</evidence>
<evidence type="ECO:0000269" key="9">
    <source>
    </source>
</evidence>
<evidence type="ECO:0000303" key="10">
    <source>
    </source>
</evidence>
<evidence type="ECO:0000303" key="11">
    <source>
    </source>
</evidence>
<evidence type="ECO:0000303" key="12">
    <source>
    </source>
</evidence>
<evidence type="ECO:0000303" key="13">
    <source>
    </source>
</evidence>
<evidence type="ECO:0000305" key="14"/>
<evidence type="ECO:0007744" key="15">
    <source>
    </source>
</evidence>
<evidence type="ECO:0007744" key="16">
    <source>
    </source>
</evidence>
<evidence type="ECO:0007744" key="17">
    <source>
    </source>
</evidence>
<evidence type="ECO:0007744" key="18">
    <source>
    </source>
</evidence>
<gene>
    <name type="primary">Nipbl</name>
    <name evidence="13" type="synonym">Scc2</name>
</gene>
<organism>
    <name type="scientific">Mus musculus</name>
    <name type="common">Mouse</name>
    <dbReference type="NCBI Taxonomy" id="10090"/>
    <lineage>
        <taxon>Eukaryota</taxon>
        <taxon>Metazoa</taxon>
        <taxon>Chordata</taxon>
        <taxon>Craniata</taxon>
        <taxon>Vertebrata</taxon>
        <taxon>Euteleostomi</taxon>
        <taxon>Mammalia</taxon>
        <taxon>Eutheria</taxon>
        <taxon>Euarchontoglires</taxon>
        <taxon>Glires</taxon>
        <taxon>Rodentia</taxon>
        <taxon>Myomorpha</taxon>
        <taxon>Muroidea</taxon>
        <taxon>Muridae</taxon>
        <taxon>Murinae</taxon>
        <taxon>Mus</taxon>
        <taxon>Mus</taxon>
    </lineage>
</organism>
<feature type="chain" id="PRO_0000218597" description="Nipped-B-like protein">
    <location>
        <begin position="1"/>
        <end position="2798"/>
    </location>
</feature>
<feature type="repeat" description="HEAT 1">
    <location>
        <begin position="1761"/>
        <end position="1799"/>
    </location>
</feature>
<feature type="repeat" description="HEAT 2">
    <location>
        <begin position="1837"/>
        <end position="1875"/>
    </location>
</feature>
<feature type="repeat" description="HEAT 3">
    <location>
        <begin position="1939"/>
        <end position="1978"/>
    </location>
</feature>
<feature type="repeat" description="HEAT 4">
    <location>
        <begin position="2221"/>
        <end position="2261"/>
    </location>
</feature>
<feature type="repeat" description="HEAT 5">
    <location>
        <begin position="2307"/>
        <end position="2345"/>
    </location>
</feature>
<feature type="region of interest" description="Disordered" evidence="2">
    <location>
        <begin position="128"/>
        <end position="338"/>
    </location>
</feature>
<feature type="region of interest" description="Disordered" evidence="2">
    <location>
        <begin position="482"/>
        <end position="940"/>
    </location>
</feature>
<feature type="region of interest" description="Disordered" evidence="2">
    <location>
        <begin position="1011"/>
        <end position="1041"/>
    </location>
</feature>
<feature type="region of interest" description="Disordered" evidence="2">
    <location>
        <begin position="1054"/>
        <end position="1186"/>
    </location>
</feature>
<feature type="region of interest" description="Disordered" evidence="2">
    <location>
        <begin position="1685"/>
        <end position="1706"/>
    </location>
</feature>
<feature type="region of interest" description="Disordered" evidence="2">
    <location>
        <begin position="2467"/>
        <end position="2514"/>
    </location>
</feature>
<feature type="region of interest" description="Disordered" evidence="2">
    <location>
        <begin position="2645"/>
        <end position="2690"/>
    </location>
</feature>
<feature type="short sequence motif" description="PxVxL motif" evidence="1">
    <location>
        <begin position="990"/>
        <end position="1003"/>
    </location>
</feature>
<feature type="compositionally biased region" description="Polar residues" evidence="2">
    <location>
        <begin position="128"/>
        <end position="173"/>
    </location>
</feature>
<feature type="compositionally biased region" description="Polar residues" evidence="2">
    <location>
        <begin position="191"/>
        <end position="208"/>
    </location>
</feature>
<feature type="compositionally biased region" description="Basic and acidic residues" evidence="2">
    <location>
        <begin position="234"/>
        <end position="249"/>
    </location>
</feature>
<feature type="compositionally biased region" description="Basic and acidic residues" evidence="2">
    <location>
        <begin position="482"/>
        <end position="500"/>
    </location>
</feature>
<feature type="compositionally biased region" description="Polar residues" evidence="2">
    <location>
        <begin position="523"/>
        <end position="534"/>
    </location>
</feature>
<feature type="compositionally biased region" description="Basic and acidic residues" evidence="2">
    <location>
        <begin position="562"/>
        <end position="572"/>
    </location>
</feature>
<feature type="compositionally biased region" description="Basic and acidic residues" evidence="2">
    <location>
        <begin position="593"/>
        <end position="625"/>
    </location>
</feature>
<feature type="compositionally biased region" description="Basic and acidic residues" evidence="2">
    <location>
        <begin position="634"/>
        <end position="663"/>
    </location>
</feature>
<feature type="compositionally biased region" description="Basic and acidic residues" evidence="2">
    <location>
        <begin position="672"/>
        <end position="685"/>
    </location>
</feature>
<feature type="compositionally biased region" description="Basic and acidic residues" evidence="2">
    <location>
        <begin position="694"/>
        <end position="899"/>
    </location>
</feature>
<feature type="compositionally biased region" description="Basic and acidic residues" evidence="2">
    <location>
        <begin position="908"/>
        <end position="933"/>
    </location>
</feature>
<feature type="compositionally biased region" description="Acidic residues" evidence="2">
    <location>
        <begin position="1083"/>
        <end position="1094"/>
    </location>
</feature>
<feature type="compositionally biased region" description="Basic and acidic residues" evidence="2">
    <location>
        <begin position="1103"/>
        <end position="1133"/>
    </location>
</feature>
<feature type="compositionally biased region" description="Basic residues" evidence="2">
    <location>
        <begin position="1165"/>
        <end position="1176"/>
    </location>
</feature>
<feature type="compositionally biased region" description="Basic and acidic residues" evidence="2">
    <location>
        <begin position="1685"/>
        <end position="1705"/>
    </location>
</feature>
<feature type="compositionally biased region" description="Basic and acidic residues" evidence="2">
    <location>
        <begin position="2467"/>
        <end position="2483"/>
    </location>
</feature>
<feature type="compositionally biased region" description="Acidic residues" evidence="2">
    <location>
        <begin position="2504"/>
        <end position="2513"/>
    </location>
</feature>
<feature type="modified residue" description="Phosphoserine" evidence="17">
    <location>
        <position position="150"/>
    </location>
</feature>
<feature type="modified residue" description="Phosphoserine" evidence="1">
    <location>
        <position position="162"/>
    </location>
</feature>
<feature type="modified residue" description="Phosphoserine" evidence="1">
    <location>
        <position position="243"/>
    </location>
</feature>
<feature type="modified residue" description="Phosphoserine" evidence="17">
    <location>
        <position position="256"/>
    </location>
</feature>
<feature type="modified residue" description="Phosphoserine" evidence="17">
    <location>
        <position position="274"/>
    </location>
</feature>
<feature type="modified residue" description="Phosphoserine" evidence="15 17">
    <location>
        <position position="280"/>
    </location>
</feature>
<feature type="modified residue" description="Phosphoserine" evidence="17">
    <location>
        <position position="284"/>
    </location>
</feature>
<feature type="modified residue" description="Phosphoserine" evidence="17">
    <location>
        <position position="301"/>
    </location>
</feature>
<feature type="modified residue" description="Phosphoserine" evidence="17">
    <location>
        <position position="306"/>
    </location>
</feature>
<feature type="modified residue" description="Phosphoserine" evidence="17">
    <location>
        <position position="318"/>
    </location>
</feature>
<feature type="modified residue" description="Phosphoserine" evidence="1">
    <location>
        <position position="350"/>
    </location>
</feature>
<feature type="modified residue" description="Phosphothreonine" evidence="1">
    <location>
        <position position="713"/>
    </location>
</feature>
<feature type="modified residue" description="Phosphothreonine" evidence="1">
    <location>
        <position position="746"/>
    </location>
</feature>
<feature type="modified residue" description="Phosphoserine" evidence="1">
    <location>
        <position position="906"/>
    </location>
</feature>
<feature type="modified residue" description="N6-acetyllysine" evidence="18">
    <location>
        <position position="1076"/>
    </location>
</feature>
<feature type="modified residue" description="Phosphoserine" evidence="17">
    <location>
        <position position="1083"/>
    </location>
</feature>
<feature type="modified residue" description="Phosphoserine" evidence="17">
    <location>
        <position position="1084"/>
    </location>
</feature>
<feature type="modified residue" description="Phosphoserine" evidence="17">
    <location>
        <position position="1090"/>
    </location>
</feature>
<feature type="modified residue" description="Phosphoserine" evidence="17">
    <location>
        <position position="1144"/>
    </location>
</feature>
<feature type="modified residue" description="Phosphoserine" evidence="17">
    <location>
        <position position="1146"/>
    </location>
</feature>
<feature type="modified residue" description="Phosphoserine" evidence="17">
    <location>
        <position position="1148"/>
    </location>
</feature>
<feature type="modified residue" description="Phosphotyrosine" evidence="17">
    <location>
        <position position="1153"/>
    </location>
</feature>
<feature type="modified residue" description="Phosphoserine" evidence="17">
    <location>
        <position position="1154"/>
    </location>
</feature>
<feature type="modified residue" description="Phosphothreonine" evidence="1">
    <location>
        <position position="1183"/>
    </location>
</feature>
<feature type="modified residue" description="Phosphoserine" evidence="1">
    <location>
        <position position="1191"/>
    </location>
</feature>
<feature type="modified residue" description="Phosphoserine" evidence="17">
    <location>
        <position position="2487"/>
    </location>
</feature>
<feature type="modified residue" description="Phosphoserine" evidence="17">
    <location>
        <position position="2503"/>
    </location>
</feature>
<feature type="modified residue" description="Phosphoserine" evidence="17">
    <location>
        <position position="2505"/>
    </location>
</feature>
<feature type="modified residue" description="Phosphoserine" evidence="17">
    <location>
        <position position="2507"/>
    </location>
</feature>
<feature type="modified residue" description="Phosphoserine" evidence="1">
    <location>
        <position position="2509"/>
    </location>
</feature>
<feature type="modified residue" description="Phosphoserine" evidence="1">
    <location>
        <position position="2646"/>
    </location>
</feature>
<feature type="modified residue" description="Phosphoserine" evidence="15 16 17">
    <location>
        <position position="2652"/>
    </location>
</feature>
<feature type="modified residue" description="Phosphothreonine" evidence="15 17">
    <location>
        <position position="2661"/>
    </location>
</feature>
<feature type="modified residue" description="Phosphoserine" evidence="15 17">
    <location>
        <position position="2666"/>
    </location>
</feature>
<feature type="splice variant" id="VSP_011094" description="In isoform 3." evidence="11">
    <location>
        <begin position="1"/>
        <end position="2694"/>
    </location>
</feature>
<feature type="splice variant" id="VSP_011095" description="In isoform 4." evidence="12">
    <location>
        <begin position="1"/>
        <end position="263"/>
    </location>
</feature>
<feature type="splice variant" id="VSP_011096" description="In isoform 4." evidence="12">
    <original>DKPLKKRKQDSYPQEAGGATGGNRPASQETGSTGNGSRPALMVSIDLHQAGRVDSQAS</original>
    <variation>GKGPLSLLLQHLATCVLIPTSLLRYEFHSLAEASISDLIIQYHRLSNLNYITLFELLY</variation>
    <location>
        <begin position="499"/>
        <end position="556"/>
    </location>
</feature>
<feature type="splice variant" id="VSP_011097" description="In isoform 4." evidence="12">
    <location>
        <begin position="557"/>
        <end position="2798"/>
    </location>
</feature>
<feature type="splice variant" id="VSP_011098" description="In isoform 2." evidence="10 12">
    <original>SLRRSKRNSDSTEL</original>
    <variation>VRRRRSQRISQRIT</variation>
    <location>
        <begin position="2678"/>
        <end position="2691"/>
    </location>
</feature>
<feature type="splice variant" id="VSP_011099" description="In isoform 2." evidence="10 12">
    <location>
        <begin position="2692"/>
        <end position="2798"/>
    </location>
</feature>
<feature type="sequence conflict" description="In Ref. 2; BAC25453." evidence="14" ref="2">
    <original>K</original>
    <variation>I</variation>
    <location>
        <position position="2577"/>
    </location>
</feature>
<feature type="modified residue" description="Phosphothreonine" evidence="15 17">
    <location sequence="Q6KCD5-2">
        <position position="2661"/>
    </location>
</feature>
<feature type="modified residue" description="Phosphoserine" evidence="15 17">
    <location sequence="Q6KCD5-2">
        <position position="2666"/>
    </location>
</feature>
<protein>
    <recommendedName>
        <fullName>Nipped-B-like protein</fullName>
    </recommendedName>
    <alternativeName>
        <fullName>Delangin homolog</fullName>
    </alternativeName>
    <alternativeName>
        <fullName>SCC2 homolog</fullName>
    </alternativeName>
</protein>
<keyword id="KW-0007">Acetylation</keyword>
<keyword id="KW-0010">Activator</keyword>
<keyword id="KW-0025">Alternative splicing</keyword>
<keyword id="KW-0131">Cell cycle</keyword>
<keyword id="KW-0158">Chromosome</keyword>
<keyword id="KW-0217">Developmental protein</keyword>
<keyword id="KW-0539">Nucleus</keyword>
<keyword id="KW-0597">Phosphoprotein</keyword>
<keyword id="KW-1185">Reference proteome</keyword>
<keyword id="KW-0677">Repeat</keyword>
<keyword id="KW-0804">Transcription</keyword>
<keyword id="KW-0805">Transcription regulation</keyword>